<feature type="chain" id="PRO_1000204288" description="GTP cyclohydrolase 1">
    <location>
        <begin position="1"/>
        <end position="188"/>
    </location>
</feature>
<feature type="binding site" evidence="1">
    <location>
        <position position="78"/>
    </location>
    <ligand>
        <name>Zn(2+)</name>
        <dbReference type="ChEBI" id="CHEBI:29105"/>
    </ligand>
</feature>
<feature type="binding site" evidence="1">
    <location>
        <position position="81"/>
    </location>
    <ligand>
        <name>Zn(2+)</name>
        <dbReference type="ChEBI" id="CHEBI:29105"/>
    </ligand>
</feature>
<feature type="binding site" evidence="1">
    <location>
        <position position="150"/>
    </location>
    <ligand>
        <name>Zn(2+)</name>
        <dbReference type="ChEBI" id="CHEBI:29105"/>
    </ligand>
</feature>
<proteinExistence type="inferred from homology"/>
<keyword id="KW-0342">GTP-binding</keyword>
<keyword id="KW-0378">Hydrolase</keyword>
<keyword id="KW-0479">Metal-binding</keyword>
<keyword id="KW-0547">Nucleotide-binding</keyword>
<keyword id="KW-0554">One-carbon metabolism</keyword>
<keyword id="KW-0862">Zinc</keyword>
<sequence>MPHVNYEQIEYAVRLILEAIGEDPNREGLVDTPKRVAKMYAEVFAGLHEDPKQHFQTVFSEDHEELVLVKDIPFYSMCEHHLVPFFGVAHVAYIPRGGKVTGLSKLARAVETVARRPQLQERITATVADSIMETLDPYGVMVVVEAEHMCMTMRGVKKPGAKTVTTAVRGVFETDQVARAEVLSLIKG</sequence>
<gene>
    <name evidence="1" type="primary">folE</name>
    <name type="ordered locus">GWCH70_2153</name>
</gene>
<organism>
    <name type="scientific">Geobacillus sp. (strain WCH70)</name>
    <dbReference type="NCBI Taxonomy" id="471223"/>
    <lineage>
        <taxon>Bacteria</taxon>
        <taxon>Bacillati</taxon>
        <taxon>Bacillota</taxon>
        <taxon>Bacilli</taxon>
        <taxon>Bacillales</taxon>
        <taxon>Anoxybacillaceae</taxon>
        <taxon>Geobacillus</taxon>
    </lineage>
</organism>
<dbReference type="EC" id="3.5.4.16" evidence="1"/>
<dbReference type="EMBL" id="CP001638">
    <property type="protein sequence ID" value="ACS24863.1"/>
    <property type="molecule type" value="Genomic_DNA"/>
</dbReference>
<dbReference type="SMR" id="C5D3E8"/>
<dbReference type="STRING" id="471223.GWCH70_2153"/>
<dbReference type="KEGG" id="gwc:GWCH70_2153"/>
<dbReference type="eggNOG" id="COG0302">
    <property type="taxonomic scope" value="Bacteria"/>
</dbReference>
<dbReference type="HOGENOM" id="CLU_049768_3_3_9"/>
<dbReference type="OrthoDB" id="9801207at2"/>
<dbReference type="UniPathway" id="UPA00848">
    <property type="reaction ID" value="UER00151"/>
</dbReference>
<dbReference type="GO" id="GO:0005737">
    <property type="term" value="C:cytoplasm"/>
    <property type="evidence" value="ECO:0007669"/>
    <property type="project" value="TreeGrafter"/>
</dbReference>
<dbReference type="GO" id="GO:0005525">
    <property type="term" value="F:GTP binding"/>
    <property type="evidence" value="ECO:0007669"/>
    <property type="project" value="UniProtKB-KW"/>
</dbReference>
<dbReference type="GO" id="GO:0003934">
    <property type="term" value="F:GTP cyclohydrolase I activity"/>
    <property type="evidence" value="ECO:0007669"/>
    <property type="project" value="UniProtKB-UniRule"/>
</dbReference>
<dbReference type="GO" id="GO:0008270">
    <property type="term" value="F:zinc ion binding"/>
    <property type="evidence" value="ECO:0007669"/>
    <property type="project" value="UniProtKB-UniRule"/>
</dbReference>
<dbReference type="GO" id="GO:0006730">
    <property type="term" value="P:one-carbon metabolic process"/>
    <property type="evidence" value="ECO:0007669"/>
    <property type="project" value="UniProtKB-UniRule"/>
</dbReference>
<dbReference type="GO" id="GO:0006729">
    <property type="term" value="P:tetrahydrobiopterin biosynthetic process"/>
    <property type="evidence" value="ECO:0007669"/>
    <property type="project" value="TreeGrafter"/>
</dbReference>
<dbReference type="GO" id="GO:0046654">
    <property type="term" value="P:tetrahydrofolate biosynthetic process"/>
    <property type="evidence" value="ECO:0007669"/>
    <property type="project" value="UniProtKB-UniRule"/>
</dbReference>
<dbReference type="CDD" id="cd00642">
    <property type="entry name" value="GTP_cyclohydro1"/>
    <property type="match status" value="1"/>
</dbReference>
<dbReference type="FunFam" id="1.10.286.10:FF:000001">
    <property type="entry name" value="GTP cyclohydrolase 1"/>
    <property type="match status" value="1"/>
</dbReference>
<dbReference type="FunFam" id="3.30.1130.10:FF:000001">
    <property type="entry name" value="GTP cyclohydrolase 1"/>
    <property type="match status" value="1"/>
</dbReference>
<dbReference type="Gene3D" id="1.10.286.10">
    <property type="match status" value="1"/>
</dbReference>
<dbReference type="Gene3D" id="3.30.1130.10">
    <property type="match status" value="1"/>
</dbReference>
<dbReference type="HAMAP" id="MF_00223">
    <property type="entry name" value="FolE"/>
    <property type="match status" value="1"/>
</dbReference>
<dbReference type="InterPro" id="IPR043133">
    <property type="entry name" value="GTP-CH-I_C/QueF"/>
</dbReference>
<dbReference type="InterPro" id="IPR043134">
    <property type="entry name" value="GTP-CH-I_N"/>
</dbReference>
<dbReference type="InterPro" id="IPR001474">
    <property type="entry name" value="GTP_CycHdrlase_I"/>
</dbReference>
<dbReference type="InterPro" id="IPR018234">
    <property type="entry name" value="GTP_CycHdrlase_I_CS"/>
</dbReference>
<dbReference type="InterPro" id="IPR020602">
    <property type="entry name" value="GTP_CycHdrlase_I_dom"/>
</dbReference>
<dbReference type="NCBIfam" id="TIGR00063">
    <property type="entry name" value="folE"/>
    <property type="match status" value="1"/>
</dbReference>
<dbReference type="NCBIfam" id="NF006825">
    <property type="entry name" value="PRK09347.1-2"/>
    <property type="match status" value="1"/>
</dbReference>
<dbReference type="NCBIfam" id="NF006826">
    <property type="entry name" value="PRK09347.1-3"/>
    <property type="match status" value="1"/>
</dbReference>
<dbReference type="PANTHER" id="PTHR11109:SF7">
    <property type="entry name" value="GTP CYCLOHYDROLASE 1"/>
    <property type="match status" value="1"/>
</dbReference>
<dbReference type="PANTHER" id="PTHR11109">
    <property type="entry name" value="GTP CYCLOHYDROLASE I"/>
    <property type="match status" value="1"/>
</dbReference>
<dbReference type="Pfam" id="PF01227">
    <property type="entry name" value="GTP_cyclohydroI"/>
    <property type="match status" value="1"/>
</dbReference>
<dbReference type="SUPFAM" id="SSF55620">
    <property type="entry name" value="Tetrahydrobiopterin biosynthesis enzymes-like"/>
    <property type="match status" value="1"/>
</dbReference>
<dbReference type="PROSITE" id="PS00859">
    <property type="entry name" value="GTP_CYCLOHYDROL_1_1"/>
    <property type="match status" value="1"/>
</dbReference>
<dbReference type="PROSITE" id="PS00860">
    <property type="entry name" value="GTP_CYCLOHYDROL_1_2"/>
    <property type="match status" value="1"/>
</dbReference>
<evidence type="ECO:0000255" key="1">
    <source>
        <dbReference type="HAMAP-Rule" id="MF_00223"/>
    </source>
</evidence>
<protein>
    <recommendedName>
        <fullName evidence="1">GTP cyclohydrolase 1</fullName>
        <ecNumber evidence="1">3.5.4.16</ecNumber>
    </recommendedName>
    <alternativeName>
        <fullName evidence="1">GTP cyclohydrolase I</fullName>
        <shortName evidence="1">GTP-CH-I</shortName>
    </alternativeName>
</protein>
<accession>C5D3E8</accession>
<reference key="1">
    <citation type="submission" date="2009-06" db="EMBL/GenBank/DDBJ databases">
        <title>Complete sequence of chromosome of Geopacillus sp. WCH70.</title>
        <authorList>
            <consortium name="US DOE Joint Genome Institute"/>
            <person name="Lucas S."/>
            <person name="Copeland A."/>
            <person name="Lapidus A."/>
            <person name="Glavina del Rio T."/>
            <person name="Dalin E."/>
            <person name="Tice H."/>
            <person name="Bruce D."/>
            <person name="Goodwin L."/>
            <person name="Pitluck S."/>
            <person name="Chertkov O."/>
            <person name="Brettin T."/>
            <person name="Detter J.C."/>
            <person name="Han C."/>
            <person name="Larimer F."/>
            <person name="Land M."/>
            <person name="Hauser L."/>
            <person name="Kyrpides N."/>
            <person name="Mikhailova N."/>
            <person name="Brumm P."/>
            <person name="Mead D.A."/>
            <person name="Richardson P."/>
        </authorList>
    </citation>
    <scope>NUCLEOTIDE SEQUENCE [LARGE SCALE GENOMIC DNA]</scope>
    <source>
        <strain>WCH70</strain>
    </source>
</reference>
<comment type="catalytic activity">
    <reaction evidence="1">
        <text>GTP + H2O = 7,8-dihydroneopterin 3'-triphosphate + formate + H(+)</text>
        <dbReference type="Rhea" id="RHEA:17473"/>
        <dbReference type="ChEBI" id="CHEBI:15377"/>
        <dbReference type="ChEBI" id="CHEBI:15378"/>
        <dbReference type="ChEBI" id="CHEBI:15740"/>
        <dbReference type="ChEBI" id="CHEBI:37565"/>
        <dbReference type="ChEBI" id="CHEBI:58462"/>
        <dbReference type="EC" id="3.5.4.16"/>
    </reaction>
</comment>
<comment type="pathway">
    <text evidence="1">Cofactor biosynthesis; 7,8-dihydroneopterin triphosphate biosynthesis; 7,8-dihydroneopterin triphosphate from GTP: step 1/1.</text>
</comment>
<comment type="subunit">
    <text evidence="1">Homomer.</text>
</comment>
<comment type="similarity">
    <text evidence="1">Belongs to the GTP cyclohydrolase I family.</text>
</comment>
<name>GCH1_GEOSW</name>